<accession>P81874</accession>
<reference key="1">
    <citation type="journal article" date="1999" name="Electrophoresis">
        <title>Induction of heat shock proteins in response to primary alcohols in Acinetobacter calcoaceticus.</title>
        <authorList>
            <person name="Benndorf D."/>
            <person name="Loffhagen N."/>
            <person name="Babel W."/>
        </authorList>
    </citation>
    <scope>PROTEIN SEQUENCE</scope>
    <source>
        <strain>69-V</strain>
    </source>
</reference>
<dbReference type="EC" id="5.6.1.7" evidence="1"/>
<dbReference type="STRING" id="471.BUM88_15355"/>
<dbReference type="GO" id="GO:0005737">
    <property type="term" value="C:cytoplasm"/>
    <property type="evidence" value="ECO:0007669"/>
    <property type="project" value="UniProtKB-SubCell"/>
</dbReference>
<dbReference type="GO" id="GO:0005524">
    <property type="term" value="F:ATP binding"/>
    <property type="evidence" value="ECO:0007669"/>
    <property type="project" value="UniProtKB-KW"/>
</dbReference>
<dbReference type="GO" id="GO:0016853">
    <property type="term" value="F:isomerase activity"/>
    <property type="evidence" value="ECO:0007669"/>
    <property type="project" value="UniProtKB-KW"/>
</dbReference>
<feature type="chain" id="PRO_0000063252" description="Chaperonin GroEL">
    <location>
        <begin position="1"/>
        <end position="24" status="greater than"/>
    </location>
</feature>
<feature type="non-terminal residue">
    <location>
        <position position="24"/>
    </location>
</feature>
<gene>
    <name evidence="1" type="primary">groEL</name>
    <name evidence="1" type="synonym">groL</name>
    <name type="synonym">mopA</name>
</gene>
<proteinExistence type="evidence at protein level"/>
<evidence type="ECO:0000255" key="1">
    <source>
        <dbReference type="HAMAP-Rule" id="MF_00600"/>
    </source>
</evidence>
<evidence type="ECO:0000305" key="2"/>
<keyword id="KW-0067">ATP-binding</keyword>
<keyword id="KW-0143">Chaperone</keyword>
<keyword id="KW-0963">Cytoplasm</keyword>
<keyword id="KW-0903">Direct protein sequencing</keyword>
<keyword id="KW-0413">Isomerase</keyword>
<keyword id="KW-0547">Nucleotide-binding</keyword>
<keyword id="KW-0346">Stress response</keyword>
<name>CH60_ACICA</name>
<organism>
    <name type="scientific">Acinetobacter calcoaceticus</name>
    <dbReference type="NCBI Taxonomy" id="471"/>
    <lineage>
        <taxon>Bacteria</taxon>
        <taxon>Pseudomonadati</taxon>
        <taxon>Pseudomonadota</taxon>
        <taxon>Gammaproteobacteria</taxon>
        <taxon>Moraxellales</taxon>
        <taxon>Moraxellaceae</taxon>
        <taxon>Acinetobacter</taxon>
        <taxon>Acinetobacter calcoaceticus/baumannii complex</taxon>
    </lineage>
</organism>
<sequence length="24" mass="2483">SAKDVKFGDSARSMMIAGVNVIAD</sequence>
<comment type="function">
    <text evidence="1">Together with its co-chaperonin GroES, plays an essential role in assisting protein folding. The GroEL-GroES system forms a nano-cage that allows encapsulation of the non-native substrate proteins and provides a physical environment optimized to promote and accelerate protein folding.</text>
</comment>
<comment type="catalytic activity">
    <reaction evidence="1">
        <text>ATP + H2O + a folded polypeptide = ADP + phosphate + an unfolded polypeptide.</text>
        <dbReference type="EC" id="5.6.1.7"/>
    </reaction>
</comment>
<comment type="subunit">
    <text evidence="1">Forms a cylinder of 14 subunits composed of two heptameric rings stacked back-to-back. Interacts with the co-chaperonin GroES.</text>
</comment>
<comment type="subcellular location">
    <subcellularLocation>
        <location evidence="1">Cytoplasm</location>
    </subcellularLocation>
</comment>
<comment type="induction">
    <text>By heat shock and ethanol.</text>
</comment>
<comment type="similarity">
    <text evidence="1 2">Belongs to the chaperonin (HSP60) family.</text>
</comment>
<protein>
    <recommendedName>
        <fullName evidence="1">Chaperonin GroEL</fullName>
        <ecNumber evidence="1">5.6.1.7</ecNumber>
    </recommendedName>
    <alternativeName>
        <fullName evidence="1">60 kDa chaperonin</fullName>
    </alternativeName>
    <alternativeName>
        <fullName evidence="1">Chaperonin-60</fullName>
        <shortName evidence="1">Cpn60</shortName>
    </alternativeName>
</protein>